<gene>
    <name type="primary">YJU3</name>
    <name type="ordered locus">YKL094W</name>
    <name type="ORF">YKL441</name>
</gene>
<evidence type="ECO:0000269" key="1">
    <source>
    </source>
</evidence>
<evidence type="ECO:0000269" key="2">
    <source>
    </source>
</evidence>
<evidence type="ECO:0000269" key="3">
    <source>
    </source>
</evidence>
<evidence type="ECO:0000269" key="4">
    <source>
    </source>
</evidence>
<evidence type="ECO:0000269" key="5">
    <source>
    </source>
</evidence>
<evidence type="ECO:0000269" key="6">
    <source>
    </source>
</evidence>
<evidence type="ECO:0000269" key="7">
    <source>
    </source>
</evidence>
<evidence type="ECO:0000269" key="8">
    <source>
    </source>
</evidence>
<evidence type="ECO:0000269" key="9">
    <source>
    </source>
</evidence>
<evidence type="ECO:0000269" key="10">
    <source>
    </source>
</evidence>
<evidence type="ECO:0000269" key="11">
    <source>
    </source>
</evidence>
<evidence type="ECO:0000303" key="12">
    <source>
    </source>
</evidence>
<evidence type="ECO:0000305" key="13"/>
<evidence type="ECO:0000305" key="14">
    <source>
    </source>
</evidence>
<evidence type="ECO:0000305" key="15">
    <source>
    </source>
</evidence>
<evidence type="ECO:0000305" key="16">
    <source>
    </source>
</evidence>
<evidence type="ECO:0000305" key="17">
    <source ref="14"/>
</evidence>
<evidence type="ECO:0007829" key="18">
    <source>
        <dbReference type="PDB" id="4ZWN"/>
    </source>
</evidence>
<accession>P28321</accession>
<accession>D6VXJ4</accession>
<dbReference type="EC" id="3.1.1.23" evidence="7"/>
<dbReference type="EMBL" id="X66245">
    <property type="protein sequence ID" value="CAA46971.1"/>
    <property type="molecule type" value="Genomic_DNA"/>
</dbReference>
<dbReference type="EMBL" id="X71133">
    <property type="protein sequence ID" value="CAA50463.1"/>
    <property type="molecule type" value="Genomic_DNA"/>
</dbReference>
<dbReference type="EMBL" id="Z28094">
    <property type="protein sequence ID" value="CAA81932.1"/>
    <property type="molecule type" value="Genomic_DNA"/>
</dbReference>
<dbReference type="EMBL" id="BK006944">
    <property type="protein sequence ID" value="DAA09064.1"/>
    <property type="molecule type" value="Genomic_DNA"/>
</dbReference>
<dbReference type="PIR" id="S37921">
    <property type="entry name" value="S37921"/>
</dbReference>
<dbReference type="RefSeq" id="NP_012829.1">
    <property type="nucleotide sequence ID" value="NM_001179660.1"/>
</dbReference>
<dbReference type="PDB" id="4ZWN">
    <property type="method" value="X-ray"/>
    <property type="resolution" value="2.49 A"/>
    <property type="chains" value="A/B/C/D=2-313"/>
</dbReference>
<dbReference type="PDB" id="4ZXF">
    <property type="method" value="X-ray"/>
    <property type="resolution" value="2.50 A"/>
    <property type="chains" value="A/B/C/D=1-313"/>
</dbReference>
<dbReference type="PDBsum" id="4ZWN"/>
<dbReference type="PDBsum" id="4ZXF"/>
<dbReference type="SMR" id="P28321"/>
<dbReference type="BioGRID" id="34039">
    <property type="interactions" value="74"/>
</dbReference>
<dbReference type="FunCoup" id="P28321">
    <property type="interactions" value="509"/>
</dbReference>
<dbReference type="IntAct" id="P28321">
    <property type="interactions" value="15"/>
</dbReference>
<dbReference type="MINT" id="P28321"/>
<dbReference type="STRING" id="4932.YKL094W"/>
<dbReference type="SwissLipids" id="SLP:000000055"/>
<dbReference type="ESTHER" id="yeast-mgll">
    <property type="family name" value="Monoglyceridelipase_lysophospholip"/>
</dbReference>
<dbReference type="MEROPS" id="S33.993"/>
<dbReference type="iPTMnet" id="P28321"/>
<dbReference type="PaxDb" id="4932-YKL094W"/>
<dbReference type="PeptideAtlas" id="P28321"/>
<dbReference type="EnsemblFungi" id="YKL094W_mRNA">
    <property type="protein sequence ID" value="YKL094W"/>
    <property type="gene ID" value="YKL094W"/>
</dbReference>
<dbReference type="GeneID" id="853768"/>
<dbReference type="KEGG" id="sce:YKL094W"/>
<dbReference type="AGR" id="SGD:S000001577"/>
<dbReference type="SGD" id="S000001577">
    <property type="gene designation" value="YJU3"/>
</dbReference>
<dbReference type="VEuPathDB" id="FungiDB:YKL094W"/>
<dbReference type="eggNOG" id="KOG1455">
    <property type="taxonomic scope" value="Eukaryota"/>
</dbReference>
<dbReference type="GeneTree" id="ENSGT00390000011364"/>
<dbReference type="HOGENOM" id="CLU_026209_5_0_1"/>
<dbReference type="InParanoid" id="P28321"/>
<dbReference type="OMA" id="QNAQNLW"/>
<dbReference type="OrthoDB" id="10249433at2759"/>
<dbReference type="BioCyc" id="MetaCyc:G3O-31885-MONOMER"/>
<dbReference type="BioCyc" id="YEAST:G3O-31885-MONOMER"/>
<dbReference type="Reactome" id="R-SCE-1482883">
    <property type="pathway name" value="Acyl chain remodeling of DAG and TAG"/>
</dbReference>
<dbReference type="Reactome" id="R-SCE-426048">
    <property type="pathway name" value="Arachidonate production from DAG"/>
</dbReference>
<dbReference type="UniPathway" id="UPA00256"/>
<dbReference type="BioGRID-ORCS" id="853768">
    <property type="hits" value="0 hits in 10 CRISPR screens"/>
</dbReference>
<dbReference type="EvolutionaryTrace" id="P28321"/>
<dbReference type="PRO" id="PR:P28321"/>
<dbReference type="Proteomes" id="UP000002311">
    <property type="component" value="Chromosome XI"/>
</dbReference>
<dbReference type="RNAct" id="P28321">
    <property type="molecule type" value="protein"/>
</dbReference>
<dbReference type="GO" id="GO:0071944">
    <property type="term" value="C:cell periphery"/>
    <property type="evidence" value="ECO:0007005"/>
    <property type="project" value="SGD"/>
</dbReference>
<dbReference type="GO" id="GO:0005737">
    <property type="term" value="C:cytoplasm"/>
    <property type="evidence" value="ECO:0007005"/>
    <property type="project" value="SGD"/>
</dbReference>
<dbReference type="GO" id="GO:0005783">
    <property type="term" value="C:endoplasmic reticulum"/>
    <property type="evidence" value="ECO:0007005"/>
    <property type="project" value="SGD"/>
</dbReference>
<dbReference type="GO" id="GO:0005811">
    <property type="term" value="C:lipid droplet"/>
    <property type="evidence" value="ECO:0000314"/>
    <property type="project" value="SGD"/>
</dbReference>
<dbReference type="GO" id="GO:0016020">
    <property type="term" value="C:membrane"/>
    <property type="evidence" value="ECO:0000314"/>
    <property type="project" value="SGD"/>
</dbReference>
<dbReference type="GO" id="GO:0005741">
    <property type="term" value="C:mitochondrial outer membrane"/>
    <property type="evidence" value="ECO:0007005"/>
    <property type="project" value="SGD"/>
</dbReference>
<dbReference type="GO" id="GO:0005739">
    <property type="term" value="C:mitochondrion"/>
    <property type="evidence" value="ECO:0007005"/>
    <property type="project" value="SGD"/>
</dbReference>
<dbReference type="GO" id="GO:0005886">
    <property type="term" value="C:plasma membrane"/>
    <property type="evidence" value="ECO:0007005"/>
    <property type="project" value="SGD"/>
</dbReference>
<dbReference type="GO" id="GO:0047372">
    <property type="term" value="F:monoacylglycerol lipase activity"/>
    <property type="evidence" value="ECO:0000315"/>
    <property type="project" value="SGD"/>
</dbReference>
<dbReference type="GO" id="GO:0017171">
    <property type="term" value="F:serine hydrolase activity"/>
    <property type="evidence" value="ECO:0007005"/>
    <property type="project" value="SGD"/>
</dbReference>
<dbReference type="GO" id="GO:0019433">
    <property type="term" value="P:triglyceride catabolic process"/>
    <property type="evidence" value="ECO:0007669"/>
    <property type="project" value="UniProtKB-UniPathway"/>
</dbReference>
<dbReference type="GO" id="GO:0006641">
    <property type="term" value="P:triglyceride metabolic process"/>
    <property type="evidence" value="ECO:0000315"/>
    <property type="project" value="SGD"/>
</dbReference>
<dbReference type="FunFam" id="3.40.50.1820:FF:000349">
    <property type="entry name" value="Monoglyceride lipase"/>
    <property type="match status" value="1"/>
</dbReference>
<dbReference type="Gene3D" id="3.40.50.1820">
    <property type="entry name" value="alpha/beta hydrolase"/>
    <property type="match status" value="1"/>
</dbReference>
<dbReference type="InterPro" id="IPR029058">
    <property type="entry name" value="AB_hydrolase_fold"/>
</dbReference>
<dbReference type="InterPro" id="IPR022742">
    <property type="entry name" value="Hydrolase_4"/>
</dbReference>
<dbReference type="InterPro" id="IPR051044">
    <property type="entry name" value="MAG_DAG_Lipase"/>
</dbReference>
<dbReference type="PANTHER" id="PTHR11614">
    <property type="entry name" value="PHOSPHOLIPASE-RELATED"/>
    <property type="match status" value="1"/>
</dbReference>
<dbReference type="Pfam" id="PF12146">
    <property type="entry name" value="Hydrolase_4"/>
    <property type="match status" value="1"/>
</dbReference>
<dbReference type="SUPFAM" id="SSF53474">
    <property type="entry name" value="alpha/beta-Hydrolases"/>
    <property type="match status" value="1"/>
</dbReference>
<name>MGLL_YEAST</name>
<reference key="1">
    <citation type="journal article" date="1992" name="Yeast">
        <title>Sequence of the novel essential gene YJU2 and two flanking reading frames located within a 3.2 kb EcoRI fragment from chromosome X of Saccharomyces cerevisiae.</title>
        <authorList>
            <person name="Forrova H."/>
            <person name="Kolarov J."/>
            <person name="Ghislain M."/>
            <person name="Goffeau A."/>
        </authorList>
    </citation>
    <scope>NUCLEOTIDE SEQUENCE [GENOMIC DNA]</scope>
    <source>
        <strain>ATCC 204508 / S288c</strain>
    </source>
</reference>
<reference key="2">
    <citation type="journal article" date="1993" name="Yeast">
        <title>DNA sequence analysis of a 17 kb fragment of yeast chromosome XI physically localizes the MRB1 gene and reveals eight new open reading frames, including a homologue of the KIN1/KIN2 and SNF1 protein kinases.</title>
        <authorList>
            <person name="Pallier C."/>
            <person name="Valens M."/>
            <person name="Puzos V."/>
            <person name="Fukuhara H."/>
            <person name="Cheret G."/>
            <person name="Sor F."/>
            <person name="Bolotin-Fukuhara M."/>
        </authorList>
    </citation>
    <scope>NUCLEOTIDE SEQUENCE [GENOMIC DNA]</scope>
    <source>
        <strain>ATCC 204508 / S288c</strain>
    </source>
</reference>
<reference key="3">
    <citation type="journal article" date="1994" name="Nature">
        <title>Complete DNA sequence of yeast chromosome XI.</title>
        <authorList>
            <person name="Dujon B."/>
            <person name="Alexandraki D."/>
            <person name="Andre B."/>
            <person name="Ansorge W."/>
            <person name="Baladron V."/>
            <person name="Ballesta J.P.G."/>
            <person name="Banrevi A."/>
            <person name="Bolle P.-A."/>
            <person name="Bolotin-Fukuhara M."/>
            <person name="Bossier P."/>
            <person name="Bou G."/>
            <person name="Boyer J."/>
            <person name="Buitrago M.J."/>
            <person name="Cheret G."/>
            <person name="Colleaux L."/>
            <person name="Daignan-Fornier B."/>
            <person name="del Rey F."/>
            <person name="Dion C."/>
            <person name="Domdey H."/>
            <person name="Duesterhoeft A."/>
            <person name="Duesterhus S."/>
            <person name="Entian K.-D."/>
            <person name="Erfle H."/>
            <person name="Esteban P.F."/>
            <person name="Feldmann H."/>
            <person name="Fernandes L."/>
            <person name="Fobo G.M."/>
            <person name="Fritz C."/>
            <person name="Fukuhara H."/>
            <person name="Gabel C."/>
            <person name="Gaillon L."/>
            <person name="Garcia-Cantalejo J.M."/>
            <person name="Garcia-Ramirez J.J."/>
            <person name="Gent M.E."/>
            <person name="Ghazvini M."/>
            <person name="Goffeau A."/>
            <person name="Gonzalez A."/>
            <person name="Grothues D."/>
            <person name="Guerreiro P."/>
            <person name="Hegemann J.H."/>
            <person name="Hewitt N."/>
            <person name="Hilger F."/>
            <person name="Hollenberg C.P."/>
            <person name="Horaitis O."/>
            <person name="Indge K.J."/>
            <person name="Jacquier A."/>
            <person name="James C.M."/>
            <person name="Jauniaux J.-C."/>
            <person name="Jimenez A."/>
            <person name="Keuchel H."/>
            <person name="Kirchrath L."/>
            <person name="Kleine K."/>
            <person name="Koetter P."/>
            <person name="Legrain P."/>
            <person name="Liebl S."/>
            <person name="Louis E.J."/>
            <person name="Maia e Silva A."/>
            <person name="Marck C."/>
            <person name="Monnier A.-L."/>
            <person name="Moestl D."/>
            <person name="Mueller S."/>
            <person name="Obermaier B."/>
            <person name="Oliver S.G."/>
            <person name="Pallier C."/>
            <person name="Pascolo S."/>
            <person name="Pfeiffer F."/>
            <person name="Philippsen P."/>
            <person name="Planta R.J."/>
            <person name="Pohl F.M."/>
            <person name="Pohl T.M."/>
            <person name="Poehlmann R."/>
            <person name="Portetelle D."/>
            <person name="Purnelle B."/>
            <person name="Puzos V."/>
            <person name="Ramezani Rad M."/>
            <person name="Rasmussen S.W."/>
            <person name="Remacha M.A."/>
            <person name="Revuelta J.L."/>
            <person name="Richard G.-F."/>
            <person name="Rieger M."/>
            <person name="Rodrigues-Pousada C."/>
            <person name="Rose M."/>
            <person name="Rupp T."/>
            <person name="Santos M.A."/>
            <person name="Schwager C."/>
            <person name="Sensen C."/>
            <person name="Skala J."/>
            <person name="Soares H."/>
            <person name="Sor F."/>
            <person name="Stegemann J."/>
            <person name="Tettelin H."/>
            <person name="Thierry A."/>
            <person name="Tzermia M."/>
            <person name="Urrestarazu L.A."/>
            <person name="van Dyck L."/>
            <person name="van Vliet-Reedijk J.C."/>
            <person name="Valens M."/>
            <person name="Vandenbol M."/>
            <person name="Vilela C."/>
            <person name="Vissers S."/>
            <person name="von Wettstein D."/>
            <person name="Voss H."/>
            <person name="Wiemann S."/>
            <person name="Xu G."/>
            <person name="Zimmermann J."/>
            <person name="Haasemann M."/>
            <person name="Becker I."/>
            <person name="Mewes H.-W."/>
        </authorList>
    </citation>
    <scope>NUCLEOTIDE SEQUENCE [LARGE SCALE GENOMIC DNA]</scope>
    <source>
        <strain>ATCC 204508 / S288c</strain>
    </source>
</reference>
<reference key="4">
    <citation type="journal article" date="2014" name="G3 (Bethesda)">
        <title>The reference genome sequence of Saccharomyces cerevisiae: Then and now.</title>
        <authorList>
            <person name="Engel S.R."/>
            <person name="Dietrich F.S."/>
            <person name="Fisk D.G."/>
            <person name="Binkley G."/>
            <person name="Balakrishnan R."/>
            <person name="Costanzo M.C."/>
            <person name="Dwight S.S."/>
            <person name="Hitz B.C."/>
            <person name="Karra K."/>
            <person name="Nash R.S."/>
            <person name="Weng S."/>
            <person name="Wong E.D."/>
            <person name="Lloyd P."/>
            <person name="Skrzypek M.S."/>
            <person name="Miyasato S.R."/>
            <person name="Simison M."/>
            <person name="Cherry J.M."/>
        </authorList>
    </citation>
    <scope>GENOME REANNOTATION</scope>
    <source>
        <strain>ATCC 204508 / S288c</strain>
    </source>
</reference>
<reference key="5">
    <citation type="journal article" date="1999" name="J. Bacteriol.">
        <title>Identification and characterization of major lipid particle proteins of the yeast Saccharomyces cerevisiae.</title>
        <authorList>
            <person name="Athenstaedt K."/>
            <person name="Zweytick D."/>
            <person name="Jandrositz A."/>
            <person name="Kohlwein S.D."/>
            <person name="Daum G."/>
        </authorList>
    </citation>
    <scope>IDENTIFICATION BY MASS SPECTROMETRY</scope>
    <scope>SUBCELLULAR LOCATION</scope>
</reference>
<reference key="6">
    <citation type="journal article" date="2002" name="Genes Dev.">
        <title>Subcellular localization of the yeast proteome.</title>
        <authorList>
            <person name="Kumar A."/>
            <person name="Agarwal S."/>
            <person name="Heyman J.A."/>
            <person name="Matson S."/>
            <person name="Heidtman M."/>
            <person name="Piccirillo S."/>
            <person name="Umansky L."/>
            <person name="Drawid A."/>
            <person name="Jansen R."/>
            <person name="Liu Y."/>
            <person name="Cheung K.-H."/>
            <person name="Miller P."/>
            <person name="Gerstein M."/>
            <person name="Roeder G.S."/>
            <person name="Snyder M."/>
        </authorList>
    </citation>
    <scope>SUBCELLULAR LOCATION</scope>
</reference>
<reference key="7">
    <citation type="journal article" date="2003" name="Nature">
        <title>Global analysis of protein localization in budding yeast.</title>
        <authorList>
            <person name="Huh W.-K."/>
            <person name="Falvo J.V."/>
            <person name="Gerke L.C."/>
            <person name="Carroll A.S."/>
            <person name="Howson R.W."/>
            <person name="Weissman J.S."/>
            <person name="O'Shea E.K."/>
        </authorList>
    </citation>
    <scope>SUBCELLULAR LOCATION [LARGE SCALE ANALYSIS]</scope>
</reference>
<reference key="8">
    <citation type="journal article" date="2003" name="Nature">
        <title>Global analysis of protein expression in yeast.</title>
        <authorList>
            <person name="Ghaemmaghami S."/>
            <person name="Huh W.-K."/>
            <person name="Bower K."/>
            <person name="Howson R.W."/>
            <person name="Belle A."/>
            <person name="Dephoure N."/>
            <person name="O'Shea E.K."/>
            <person name="Weissman J.S."/>
        </authorList>
    </citation>
    <scope>LEVEL OF PROTEIN EXPRESSION [LARGE SCALE ANALYSIS]</scope>
</reference>
<reference key="9">
    <citation type="journal article" date="2004" name="Mol. Cell. Proteomics">
        <title>Synergistic computational and experimental proteomics approaches for more accurate detection of active serine hydrolases in yeast.</title>
        <authorList>
            <person name="Baxter S.M."/>
            <person name="Rosenblum J.S."/>
            <person name="Knutson S."/>
            <person name="Nelson M.R."/>
            <person name="Montimurro J.S."/>
            <person name="Di Gennaro J.A."/>
            <person name="Speir J.A."/>
            <person name="Burbaum J.J."/>
            <person name="Fetrow J.S."/>
        </authorList>
    </citation>
    <scope>IDENTIFICATION AS A SERINE HYDROLASE BY MASS SPECTROMETRY</scope>
</reference>
<reference key="10">
    <citation type="journal article" date="2006" name="Mol. Biol. Cell">
        <title>Proteomic analysis of the yeast mitochondrial outer membrane reveals accumulation of a subclass of preproteins.</title>
        <authorList>
            <person name="Zahedi R.P."/>
            <person name="Sickmann A."/>
            <person name="Boehm A.M."/>
            <person name="Winkler C."/>
            <person name="Zufall N."/>
            <person name="Schoenfisch B."/>
            <person name="Guiard B."/>
            <person name="Pfanner N."/>
            <person name="Meisinger C."/>
        </authorList>
    </citation>
    <scope>SUBCELLULAR LOCATION</scope>
    <scope>IDENTIFICATION BY MASS SPECTROMETRY</scope>
</reference>
<reference key="11">
    <citation type="journal article" date="2009" name="PLoS ONE">
        <title>Genetic manipulation of palmitoylethanolamide production and inactivation in Saccharomyces cerevisiae.</title>
        <authorList>
            <person name="Muccioli G.G."/>
            <person name="Sia A."/>
            <person name="Muchowski P.J."/>
            <person name="Stella N."/>
        </authorList>
    </citation>
    <scope>FUNCTION</scope>
</reference>
<reference key="12">
    <citation type="journal article" date="2010" name="Biochim. Biophys. Acta">
        <title>Identification of Yju3p as functional orthologue of mammalian monoglyceride lipase in the yeast Saccharomyces cerevisiae.</title>
        <authorList>
            <person name="Heier C."/>
            <person name="Taschler U."/>
            <person name="Rengachari S."/>
            <person name="Oberer M."/>
            <person name="Wolinski H."/>
            <person name="Natter K."/>
            <person name="Kohlwein S.D."/>
            <person name="Leber R."/>
            <person name="Zimmermann R."/>
        </authorList>
    </citation>
    <scope>FUNCTION</scope>
    <scope>CATALYTIC ACTIVITY</scope>
    <scope>PATHWAY</scope>
    <scope>BIOPHYSICOCHEMICAL PROPERTIES</scope>
    <scope>SUBCELLULAR LOCATION</scope>
</reference>
<reference key="13">
    <citation type="journal article" date="2011" name="Biochim. Biophys. Acta">
        <title>Lipid particles/droplets of the yeast Saccharomyces cerevisiae revisited: lipidome meets proteome.</title>
        <authorList>
            <person name="Grillitsch K."/>
            <person name="Connerth M."/>
            <person name="Kofeler H."/>
            <person name="Arrey T.N."/>
            <person name="Rietschel B."/>
            <person name="Wagner B."/>
            <person name="Karas M."/>
            <person name="Daum G."/>
        </authorList>
    </citation>
    <scope>SUBCELLULAR LOCATION</scope>
</reference>
<reference key="14">
    <citation type="journal article" date="2011" name="Front. Biol.">
        <title>Triacylglycerol lipases of the yeast.</title>
        <authorList>
            <person name="Grillitsch K."/>
            <person name="Daum G."/>
        </authorList>
    </citation>
    <scope>LIPASE MOTIF</scope>
</reference>
<reference key="15">
    <citation type="journal article" date="2014" name="J. Lipid Res.">
        <title>High-confidence proteomic analysis of yeast lipid droplets identifies additional droplet proteins and reveals connections to dolichol synthesis and sterol acetylation.</title>
        <authorList>
            <person name="Currie E."/>
            <person name="Guo X."/>
            <person name="Christiano R."/>
            <person name="Chitraju C."/>
            <person name="Kory N."/>
            <person name="Harrison K."/>
            <person name="Haas J."/>
            <person name="Walther T.C."/>
            <person name="Farese R.V. Jr."/>
        </authorList>
    </citation>
    <scope>SUBCELLULAR LOCATION</scope>
</reference>
<reference key="16">
    <citation type="journal article" date="2016" name="J. Biol. Chem.">
        <title>Monoacylglycerol lipases act as evolutionarily conserved regulators of non-oxidative ethanol metabolism.</title>
        <authorList>
            <person name="Heier C."/>
            <person name="Taschler U."/>
            <person name="Radulovic M."/>
            <person name="Aschauer P."/>
            <person name="Eichmann T.O."/>
            <person name="Grond S."/>
            <person name="Wolinski H."/>
            <person name="Oberer M."/>
            <person name="Zechner R."/>
            <person name="Kohlwein S.D."/>
            <person name="Zimmermann R."/>
        </authorList>
    </citation>
    <scope>FUNCTION</scope>
    <scope>CATALYTIC ACTIVITY</scope>
</reference>
<reference key="17">
    <citation type="journal article" date="2016" name="Biochim. Biophys. Acta">
        <title>Crystal structure of the Saccharomyces cerevisiae monoglyceride lipase Yju3p.</title>
        <authorList>
            <person name="Aschauer P."/>
            <person name="Rengachari S."/>
            <person name="Lichtenegger J."/>
            <person name="Schittmayer M."/>
            <person name="Das K.M."/>
            <person name="Mayer N."/>
            <person name="Breinbauer R."/>
            <person name="Birner-Gruenberger R."/>
            <person name="Gruber C.C."/>
            <person name="Zimmermann R."/>
            <person name="Gruber K."/>
            <person name="Oberer M."/>
        </authorList>
    </citation>
    <scope>X-RAY CRYSTALLOGRAPHY (2.49 ANGSTROMS) IN COMPLEX WITH SUBSTRATE ANALOG</scope>
    <scope>FUNCTION</scope>
</reference>
<organism>
    <name type="scientific">Saccharomyces cerevisiae (strain ATCC 204508 / S288c)</name>
    <name type="common">Baker's yeast</name>
    <dbReference type="NCBI Taxonomy" id="559292"/>
    <lineage>
        <taxon>Eukaryota</taxon>
        <taxon>Fungi</taxon>
        <taxon>Dikarya</taxon>
        <taxon>Ascomycota</taxon>
        <taxon>Saccharomycotina</taxon>
        <taxon>Saccharomycetes</taxon>
        <taxon>Saccharomycetales</taxon>
        <taxon>Saccharomycetaceae</taxon>
        <taxon>Saccharomyces</taxon>
    </lineage>
</organism>
<protein>
    <recommendedName>
        <fullName evidence="13">Monoglyceride lipase</fullName>
        <shortName>MGL</shortName>
        <ecNumber evidence="7">3.1.1.23</ecNumber>
    </recommendedName>
    <alternativeName>
        <fullName evidence="12">Fatty acid ethyl ester hydrolase</fullName>
        <shortName>FAEE hydrolase</shortName>
    </alternativeName>
    <alternativeName>
        <fullName>Monoacylglycerol hydrolase</fullName>
        <shortName>MAG hydrolase</shortName>
        <shortName>MGH</shortName>
    </alternativeName>
    <alternativeName>
        <fullName>Monoacylglycerol lipase</fullName>
        <shortName>MAG lipase</shortName>
        <shortName>MAGL</shortName>
    </alternativeName>
    <alternativeName>
        <fullName>Serine hydrolase YJU3</fullName>
    </alternativeName>
</protein>
<feature type="chain" id="PRO_0000203164" description="Monoglyceride lipase">
    <location>
        <begin position="1"/>
        <end position="313"/>
    </location>
</feature>
<feature type="short sequence motif" description="GXSXG" evidence="17">
    <location>
        <begin position="121"/>
        <end position="125"/>
    </location>
</feature>
<feature type="active site" description="Nucleophile" evidence="15">
    <location>
        <position position="123"/>
    </location>
</feature>
<feature type="active site" description="Charge relay system" evidence="15">
    <location>
        <position position="251"/>
    </location>
</feature>
<feature type="active site" description="Charge relay system" evidence="15">
    <location>
        <position position="281"/>
    </location>
</feature>
<feature type="sequence conflict" description="In Ref. 1; CAA46971." evidence="13" ref="1">
    <original>I</original>
    <variation>V</variation>
    <location>
        <position position="244"/>
    </location>
</feature>
<feature type="sequence conflict" description="In Ref. 1; CAA46971." evidence="13" ref="1">
    <original>K</original>
    <variation>E</variation>
    <location>
        <position position="290"/>
    </location>
</feature>
<feature type="strand" evidence="18">
    <location>
        <begin position="16"/>
        <end position="20"/>
    </location>
</feature>
<feature type="strand" evidence="18">
    <location>
        <begin position="23"/>
        <end position="30"/>
    </location>
</feature>
<feature type="strand" evidence="18">
    <location>
        <begin position="34"/>
        <end position="36"/>
    </location>
</feature>
<feature type="strand" evidence="18">
    <location>
        <begin position="40"/>
        <end position="46"/>
    </location>
</feature>
<feature type="helix" evidence="18">
    <location>
        <begin position="53"/>
        <end position="56"/>
    </location>
</feature>
<feature type="helix" evidence="18">
    <location>
        <begin position="57"/>
        <end position="65"/>
    </location>
</feature>
<feature type="strand" evidence="18">
    <location>
        <begin position="68"/>
        <end position="73"/>
    </location>
</feature>
<feature type="turn" evidence="18">
    <location>
        <begin position="79"/>
        <end position="81"/>
    </location>
</feature>
<feature type="helix" evidence="18">
    <location>
        <begin position="84"/>
        <end position="86"/>
    </location>
</feature>
<feature type="helix" evidence="18">
    <location>
        <begin position="92"/>
        <end position="113"/>
    </location>
</feature>
<feature type="strand" evidence="18">
    <location>
        <begin position="117"/>
        <end position="122"/>
    </location>
</feature>
<feature type="helix" evidence="18">
    <location>
        <begin position="124"/>
        <end position="135"/>
    </location>
</feature>
<feature type="turn" evidence="18">
    <location>
        <begin position="137"/>
        <end position="141"/>
    </location>
</feature>
<feature type="strand" evidence="18">
    <location>
        <begin position="143"/>
        <end position="149"/>
    </location>
</feature>
<feature type="strand" evidence="18">
    <location>
        <begin position="152"/>
        <end position="154"/>
    </location>
</feature>
<feature type="helix" evidence="18">
    <location>
        <begin position="156"/>
        <end position="161"/>
    </location>
</feature>
<feature type="helix" evidence="18">
    <location>
        <begin position="164"/>
        <end position="170"/>
    </location>
</feature>
<feature type="turn" evidence="18">
    <location>
        <begin position="171"/>
        <end position="174"/>
    </location>
</feature>
<feature type="helix" evidence="18">
    <location>
        <begin position="186"/>
        <end position="189"/>
    </location>
</feature>
<feature type="helix" evidence="18">
    <location>
        <begin position="193"/>
        <end position="201"/>
    </location>
</feature>
<feature type="turn" evidence="18">
    <location>
        <begin position="203"/>
        <end position="205"/>
    </location>
</feature>
<feature type="helix" evidence="18">
    <location>
        <begin position="212"/>
        <end position="227"/>
    </location>
</feature>
<feature type="helix" evidence="18">
    <location>
        <begin position="229"/>
        <end position="231"/>
    </location>
</feature>
<feature type="helix" evidence="18">
    <location>
        <begin position="232"/>
        <end position="236"/>
    </location>
</feature>
<feature type="strand" evidence="18">
    <location>
        <begin position="243"/>
        <end position="248"/>
    </location>
</feature>
<feature type="strand" evidence="18">
    <location>
        <begin position="252"/>
        <end position="254"/>
    </location>
</feature>
<feature type="helix" evidence="18">
    <location>
        <begin position="256"/>
        <end position="265"/>
    </location>
</feature>
<feature type="strand" evidence="18">
    <location>
        <begin position="269"/>
        <end position="276"/>
    </location>
</feature>
<feature type="turn" evidence="18">
    <location>
        <begin position="283"/>
        <end position="286"/>
    </location>
</feature>
<feature type="helix" evidence="18">
    <location>
        <begin position="289"/>
        <end position="305"/>
    </location>
</feature>
<comment type="function">
    <text evidence="6 7 10 11">Converts monoacylglycerides (MAG) to free fatty acids and glycerol (PubMed:20554061). Has a strong preference for monounsaturated monoglycerides (PubMed:26869448). Required for efficient degradation of MAG, short-lived intermediates of glycerolipid metabolism which may also function as lipid signaling molecules. Controls inactivation of the signaling lipid N-palmitoylethanolamine (PEA) (PubMed:19529773). Involved in fatty acid ethyl ester (FAEE) catabolism. FAEEs are non-oxidative metabolites of ethanol that are transiently incorporated into lipid droplets (LDs). Their mobilization by LD-resident FAEE hydrolases facilitates a controlled metabolism of these potentially toxic lipid metabolites (PubMed:27036938).</text>
</comment>
<comment type="catalytic activity">
    <reaction evidence="7">
        <text>Hydrolyzes glycerol monoesters of long-chain fatty acids.</text>
        <dbReference type="EC" id="3.1.1.23"/>
    </reaction>
</comment>
<comment type="catalytic activity">
    <reaction evidence="11">
        <text>a fatty acid ethyl ester + H2O = ethanol + a fatty acid + H(+)</text>
        <dbReference type="Rhea" id="RHEA:50148"/>
        <dbReference type="ChEBI" id="CHEBI:15377"/>
        <dbReference type="ChEBI" id="CHEBI:15378"/>
        <dbReference type="ChEBI" id="CHEBI:16236"/>
        <dbReference type="ChEBI" id="CHEBI:28868"/>
        <dbReference type="ChEBI" id="CHEBI:78206"/>
    </reaction>
</comment>
<comment type="catalytic activity">
    <reaction evidence="7 10">
        <text>1-(9Z-octadecenoyl)-glycerol + H2O = glycerol + (9Z)-octadecenoate + H(+)</text>
        <dbReference type="Rhea" id="RHEA:38487"/>
        <dbReference type="ChEBI" id="CHEBI:15377"/>
        <dbReference type="ChEBI" id="CHEBI:15378"/>
        <dbReference type="ChEBI" id="CHEBI:17754"/>
        <dbReference type="ChEBI" id="CHEBI:30823"/>
        <dbReference type="ChEBI" id="CHEBI:75342"/>
    </reaction>
    <physiologicalReaction direction="left-to-right" evidence="14">
        <dbReference type="Rhea" id="RHEA:38488"/>
    </physiologicalReaction>
</comment>
<comment type="catalytic activity">
    <reaction evidence="7">
        <text>2-(9Z-octadecenoyl)-glycerol + H2O = glycerol + (9Z)-octadecenoate + H(+)</text>
        <dbReference type="Rhea" id="RHEA:38491"/>
        <dbReference type="ChEBI" id="CHEBI:15377"/>
        <dbReference type="ChEBI" id="CHEBI:15378"/>
        <dbReference type="ChEBI" id="CHEBI:17754"/>
        <dbReference type="ChEBI" id="CHEBI:30823"/>
        <dbReference type="ChEBI" id="CHEBI:73990"/>
    </reaction>
    <physiologicalReaction direction="left-to-right" evidence="14">
        <dbReference type="Rhea" id="RHEA:38492"/>
    </physiologicalReaction>
</comment>
<comment type="catalytic activity">
    <reaction evidence="7 11">
        <text>1-hexadecanoylglycerol + H2O = glycerol + hexadecanoate + H(+)</text>
        <dbReference type="Rhea" id="RHEA:39959"/>
        <dbReference type="ChEBI" id="CHEBI:7896"/>
        <dbReference type="ChEBI" id="CHEBI:15377"/>
        <dbReference type="ChEBI" id="CHEBI:15378"/>
        <dbReference type="ChEBI" id="CHEBI:17754"/>
        <dbReference type="ChEBI" id="CHEBI:69081"/>
    </reaction>
    <physiologicalReaction direction="left-to-right" evidence="14 16">
        <dbReference type="Rhea" id="RHEA:39960"/>
    </physiologicalReaction>
</comment>
<comment type="catalytic activity">
    <reaction evidence="7">
        <text>2-hexadecanoylglycerol + H2O = glycerol + hexadecanoate + H(+)</text>
        <dbReference type="Rhea" id="RHEA:39963"/>
        <dbReference type="ChEBI" id="CHEBI:7896"/>
        <dbReference type="ChEBI" id="CHEBI:15377"/>
        <dbReference type="ChEBI" id="CHEBI:15378"/>
        <dbReference type="ChEBI" id="CHEBI:17754"/>
        <dbReference type="ChEBI" id="CHEBI:75455"/>
    </reaction>
    <physiologicalReaction direction="left-to-right" evidence="14">
        <dbReference type="Rhea" id="RHEA:39964"/>
    </physiologicalReaction>
</comment>
<comment type="catalytic activity">
    <reaction evidence="11">
        <text>ethyl hexadecanoate + H2O = ethanol + hexadecanoate + H(+)</text>
        <dbReference type="Rhea" id="RHEA:50132"/>
        <dbReference type="ChEBI" id="CHEBI:7896"/>
        <dbReference type="ChEBI" id="CHEBI:15377"/>
        <dbReference type="ChEBI" id="CHEBI:15378"/>
        <dbReference type="ChEBI" id="CHEBI:16236"/>
        <dbReference type="ChEBI" id="CHEBI:84932"/>
    </reaction>
    <physiologicalReaction direction="left-to-right" evidence="16">
        <dbReference type="Rhea" id="RHEA:50133"/>
    </physiologicalReaction>
</comment>
<comment type="catalytic activity">
    <reaction evidence="11">
        <text>ethyl (9Z)-octadecenoate + H2O = ethanol + (9Z)-octadecenoate + H(+)</text>
        <dbReference type="Rhea" id="RHEA:50136"/>
        <dbReference type="ChEBI" id="CHEBI:15377"/>
        <dbReference type="ChEBI" id="CHEBI:15378"/>
        <dbReference type="ChEBI" id="CHEBI:16236"/>
        <dbReference type="ChEBI" id="CHEBI:30823"/>
        <dbReference type="ChEBI" id="CHEBI:84940"/>
    </reaction>
    <physiologicalReaction direction="left-to-right" evidence="16">
        <dbReference type="Rhea" id="RHEA:50137"/>
    </physiologicalReaction>
</comment>
<comment type="catalytic activity">
    <reaction evidence="11">
        <text>ethyl (9Z)-hexadecenoate + H2O = (9Z)-hexadecenoate + ethanol + H(+)</text>
        <dbReference type="Rhea" id="RHEA:50144"/>
        <dbReference type="ChEBI" id="CHEBI:15377"/>
        <dbReference type="ChEBI" id="CHEBI:15378"/>
        <dbReference type="ChEBI" id="CHEBI:16236"/>
        <dbReference type="ChEBI" id="CHEBI:32372"/>
        <dbReference type="ChEBI" id="CHEBI:84934"/>
    </reaction>
    <physiologicalReaction direction="left-to-right" evidence="16">
        <dbReference type="Rhea" id="RHEA:50145"/>
    </physiologicalReaction>
</comment>
<comment type="catalytic activity">
    <reaction evidence="11">
        <text>ethyl octadecanoate + H2O = ethanol + octadecanoate + H(+)</text>
        <dbReference type="Rhea" id="RHEA:50316"/>
        <dbReference type="ChEBI" id="CHEBI:15377"/>
        <dbReference type="ChEBI" id="CHEBI:15378"/>
        <dbReference type="ChEBI" id="CHEBI:16236"/>
        <dbReference type="ChEBI" id="CHEBI:25629"/>
        <dbReference type="ChEBI" id="CHEBI:84936"/>
    </reaction>
    <physiologicalReaction direction="left-to-right" evidence="16">
        <dbReference type="Rhea" id="RHEA:50317"/>
    </physiologicalReaction>
</comment>
<comment type="biophysicochemical properties">
    <kinetics>
        <KM evidence="7">260 uM for rac-1(3)-oleoylglycerol</KM>
        <Vmax evidence="7">10.3 mmol/h/mg enzyme</Vmax>
    </kinetics>
    <phDependence>
        <text evidence="7">Active from pH 4.5 to 8.</text>
    </phDependence>
</comment>
<comment type="pathway">
    <text evidence="7">Glycerolipid metabolism; triacylglycerol degradation.</text>
</comment>
<comment type="subcellular location">
    <subcellularLocation>
        <location evidence="1 7 8 9">Lipid droplet</location>
    </subcellularLocation>
    <subcellularLocation>
        <location evidence="2">Cytoplasm</location>
    </subcellularLocation>
    <subcellularLocation>
        <location evidence="3">Endoplasmic reticulum</location>
    </subcellularLocation>
    <subcellularLocation>
        <location evidence="5">Mitochondrion outer membrane</location>
    </subcellularLocation>
    <text evidence="7">Although the protein is identified in the cytoplasm, several membrane systems and lipid droplets, MGL activity is only measured in membrane fractions and lipid droplets.</text>
</comment>
<comment type="miscellaneous">
    <text evidence="4">Present with 2140 molecules/cell in log phase SD medium.</text>
</comment>
<comment type="similarity">
    <text evidence="13">Belongs to the AB hydrolase superfamily. Monoacylglycerol lipase family.</text>
</comment>
<proteinExistence type="evidence at protein level"/>
<keyword id="KW-0002">3D-structure</keyword>
<keyword id="KW-0963">Cytoplasm</keyword>
<keyword id="KW-0256">Endoplasmic reticulum</keyword>
<keyword id="KW-0378">Hydrolase</keyword>
<keyword id="KW-0551">Lipid droplet</keyword>
<keyword id="KW-0472">Membrane</keyword>
<keyword id="KW-0496">Mitochondrion</keyword>
<keyword id="KW-1000">Mitochondrion outer membrane</keyword>
<keyword id="KW-1185">Reference proteome</keyword>
<sequence length="313" mass="35563">MAPYPYKVQTTVPELQYENFDGAKFGYMFWPVQNGTNEVRGRVLLIHGFGEYTKIQFRLMDHLSLNGYESFTFDQRGAGVTSPGRSKGVTDEYHVFNDLEHFVEKNLSECKAKGIPLFMWGHSMGGGICLNYACQGKHKNEISGYIGSGPLIILHPHTMYNKPTQIIAPLLAKFLPRVRIDTGLDLKGITSDKAYRAFLGSDPMSVPLYGSFRQIHDFMQRGAKLYKNENNYIQKNFAKDKPVIIMHGQDDTINDPKGSEKFIQDCPSADKELKLYPGARHSIFSLETDKVFNTVFNDMKQWLDKHTTTEAKP</sequence>